<sequence>MLPAHKQTLEALLADSVKQVAHALKGADAATVAPVITLERPKVAAHGDVACNVAMQLAKPLGTNPRQLAEQIVAALTAQPGAQGLVEAAEIAGPGFINLRLSAAAKQAVIAAVFDQGRAFGTSDREKGKQVLLEFVSANPTGPLHVGHGRQAALGDVLANVIASQGYAVHREFYYNDAGVQIGNLAISTQARARGLKPGDAGWPEAAYNGEYIADIARDFLNGETVAASDGEPVKGTGDVEDLDAIRKFAVTYLRREQDMDLQAFGVKFDQYYLESSLYSEGRVEKTVDALIKAGMTYEQDGALWLRTTDEGDDKDRVMRKSDGTYTYFVPDVAYHVTKWERGFTKVINIQGSDHHGTIARVRAGLQGLHIGIPKGYPDYVLHKMVTVMREGQEVKISKRAGSYVTVRDLIEWSGGAAAGQEAAPDLIDEATITRGRDAVRFFLISRKADTEFVFDIDLALKQNDENPVYYVQYAHARICSVLNELKSRYNVDVAQLPGADLSQLTSAQAASLMQKLAEYPDMLTHAANELAPHAVAFYLRDLAGEFHSFYNAERVLVDDEAPRNARAALLAATRQVLENGLAVLGVSAPAKM</sequence>
<dbReference type="EC" id="6.1.1.19" evidence="1"/>
<dbReference type="EMBL" id="CP000151">
    <property type="protein sequence ID" value="ABB09856.1"/>
    <property type="molecule type" value="Genomic_DNA"/>
</dbReference>
<dbReference type="RefSeq" id="WP_011353362.1">
    <property type="nucleotide sequence ID" value="NC_007510.1"/>
</dbReference>
<dbReference type="SMR" id="Q39CG0"/>
<dbReference type="GeneID" id="45096135"/>
<dbReference type="KEGG" id="bur:Bcep18194_A6262"/>
<dbReference type="PATRIC" id="fig|482957.22.peg.3278"/>
<dbReference type="HOGENOM" id="CLU_006406_0_1_4"/>
<dbReference type="Proteomes" id="UP000002705">
    <property type="component" value="Chromosome 1"/>
</dbReference>
<dbReference type="GO" id="GO:0005737">
    <property type="term" value="C:cytoplasm"/>
    <property type="evidence" value="ECO:0007669"/>
    <property type="project" value="UniProtKB-SubCell"/>
</dbReference>
<dbReference type="GO" id="GO:0004814">
    <property type="term" value="F:arginine-tRNA ligase activity"/>
    <property type="evidence" value="ECO:0007669"/>
    <property type="project" value="UniProtKB-UniRule"/>
</dbReference>
<dbReference type="GO" id="GO:0005524">
    <property type="term" value="F:ATP binding"/>
    <property type="evidence" value="ECO:0007669"/>
    <property type="project" value="UniProtKB-UniRule"/>
</dbReference>
<dbReference type="GO" id="GO:0006420">
    <property type="term" value="P:arginyl-tRNA aminoacylation"/>
    <property type="evidence" value="ECO:0007669"/>
    <property type="project" value="UniProtKB-UniRule"/>
</dbReference>
<dbReference type="CDD" id="cd00671">
    <property type="entry name" value="ArgRS_core"/>
    <property type="match status" value="1"/>
</dbReference>
<dbReference type="FunFam" id="1.10.730.10:FF:000008">
    <property type="entry name" value="Arginine--tRNA ligase"/>
    <property type="match status" value="1"/>
</dbReference>
<dbReference type="FunFam" id="3.40.50.620:FF:000062">
    <property type="entry name" value="Arginine--tRNA ligase"/>
    <property type="match status" value="1"/>
</dbReference>
<dbReference type="Gene3D" id="3.30.1360.70">
    <property type="entry name" value="Arginyl tRNA synthetase N-terminal domain"/>
    <property type="match status" value="1"/>
</dbReference>
<dbReference type="Gene3D" id="3.40.50.620">
    <property type="entry name" value="HUPs"/>
    <property type="match status" value="1"/>
</dbReference>
<dbReference type="Gene3D" id="1.10.730.10">
    <property type="entry name" value="Isoleucyl-tRNA Synthetase, Domain 1"/>
    <property type="match status" value="1"/>
</dbReference>
<dbReference type="HAMAP" id="MF_00123">
    <property type="entry name" value="Arg_tRNA_synth"/>
    <property type="match status" value="1"/>
</dbReference>
<dbReference type="InterPro" id="IPR001412">
    <property type="entry name" value="aa-tRNA-synth_I_CS"/>
</dbReference>
<dbReference type="InterPro" id="IPR001278">
    <property type="entry name" value="Arg-tRNA-ligase"/>
</dbReference>
<dbReference type="InterPro" id="IPR005148">
    <property type="entry name" value="Arg-tRNA-synth_N"/>
</dbReference>
<dbReference type="InterPro" id="IPR036695">
    <property type="entry name" value="Arg-tRNA-synth_N_sf"/>
</dbReference>
<dbReference type="InterPro" id="IPR035684">
    <property type="entry name" value="ArgRS_core"/>
</dbReference>
<dbReference type="InterPro" id="IPR008909">
    <property type="entry name" value="DALR_anticod-bd"/>
</dbReference>
<dbReference type="InterPro" id="IPR014729">
    <property type="entry name" value="Rossmann-like_a/b/a_fold"/>
</dbReference>
<dbReference type="InterPro" id="IPR009080">
    <property type="entry name" value="tRNAsynth_Ia_anticodon-bd"/>
</dbReference>
<dbReference type="NCBIfam" id="TIGR00456">
    <property type="entry name" value="argS"/>
    <property type="match status" value="1"/>
</dbReference>
<dbReference type="PANTHER" id="PTHR11956:SF5">
    <property type="entry name" value="ARGININE--TRNA LIGASE, CYTOPLASMIC"/>
    <property type="match status" value="1"/>
</dbReference>
<dbReference type="PANTHER" id="PTHR11956">
    <property type="entry name" value="ARGINYL-TRNA SYNTHETASE"/>
    <property type="match status" value="1"/>
</dbReference>
<dbReference type="Pfam" id="PF03485">
    <property type="entry name" value="Arg_tRNA_synt_N"/>
    <property type="match status" value="1"/>
</dbReference>
<dbReference type="Pfam" id="PF05746">
    <property type="entry name" value="DALR_1"/>
    <property type="match status" value="1"/>
</dbReference>
<dbReference type="Pfam" id="PF00750">
    <property type="entry name" value="tRNA-synt_1d"/>
    <property type="match status" value="1"/>
</dbReference>
<dbReference type="PRINTS" id="PR01038">
    <property type="entry name" value="TRNASYNTHARG"/>
</dbReference>
<dbReference type="SMART" id="SM01016">
    <property type="entry name" value="Arg_tRNA_synt_N"/>
    <property type="match status" value="1"/>
</dbReference>
<dbReference type="SMART" id="SM00836">
    <property type="entry name" value="DALR_1"/>
    <property type="match status" value="1"/>
</dbReference>
<dbReference type="SUPFAM" id="SSF47323">
    <property type="entry name" value="Anticodon-binding domain of a subclass of class I aminoacyl-tRNA synthetases"/>
    <property type="match status" value="1"/>
</dbReference>
<dbReference type="SUPFAM" id="SSF55190">
    <property type="entry name" value="Arginyl-tRNA synthetase (ArgRS), N-terminal 'additional' domain"/>
    <property type="match status" value="1"/>
</dbReference>
<dbReference type="SUPFAM" id="SSF52374">
    <property type="entry name" value="Nucleotidylyl transferase"/>
    <property type="match status" value="1"/>
</dbReference>
<dbReference type="PROSITE" id="PS00178">
    <property type="entry name" value="AA_TRNA_LIGASE_I"/>
    <property type="match status" value="1"/>
</dbReference>
<keyword id="KW-0030">Aminoacyl-tRNA synthetase</keyword>
<keyword id="KW-0067">ATP-binding</keyword>
<keyword id="KW-0963">Cytoplasm</keyword>
<keyword id="KW-0436">Ligase</keyword>
<keyword id="KW-0547">Nucleotide-binding</keyword>
<keyword id="KW-0648">Protein biosynthesis</keyword>
<feature type="chain" id="PRO_0000241999" description="Arginine--tRNA ligase">
    <location>
        <begin position="1"/>
        <end position="593"/>
    </location>
</feature>
<feature type="short sequence motif" description="'HIGH' region">
    <location>
        <begin position="138"/>
        <end position="148"/>
    </location>
</feature>
<accession>Q39CG0</accession>
<name>SYR_BURL3</name>
<evidence type="ECO:0000255" key="1">
    <source>
        <dbReference type="HAMAP-Rule" id="MF_00123"/>
    </source>
</evidence>
<organism>
    <name type="scientific">Burkholderia lata (strain ATCC 17760 / DSM 23089 / LMG 22485 / NCIMB 9086 / R18194 / 383)</name>
    <dbReference type="NCBI Taxonomy" id="482957"/>
    <lineage>
        <taxon>Bacteria</taxon>
        <taxon>Pseudomonadati</taxon>
        <taxon>Pseudomonadota</taxon>
        <taxon>Betaproteobacteria</taxon>
        <taxon>Burkholderiales</taxon>
        <taxon>Burkholderiaceae</taxon>
        <taxon>Burkholderia</taxon>
        <taxon>Burkholderia cepacia complex</taxon>
    </lineage>
</organism>
<protein>
    <recommendedName>
        <fullName evidence="1">Arginine--tRNA ligase</fullName>
        <ecNumber evidence="1">6.1.1.19</ecNumber>
    </recommendedName>
    <alternativeName>
        <fullName evidence="1">Arginyl-tRNA synthetase</fullName>
        <shortName evidence="1">ArgRS</shortName>
    </alternativeName>
</protein>
<comment type="catalytic activity">
    <reaction evidence="1">
        <text>tRNA(Arg) + L-arginine + ATP = L-arginyl-tRNA(Arg) + AMP + diphosphate</text>
        <dbReference type="Rhea" id="RHEA:20301"/>
        <dbReference type="Rhea" id="RHEA-COMP:9658"/>
        <dbReference type="Rhea" id="RHEA-COMP:9673"/>
        <dbReference type="ChEBI" id="CHEBI:30616"/>
        <dbReference type="ChEBI" id="CHEBI:32682"/>
        <dbReference type="ChEBI" id="CHEBI:33019"/>
        <dbReference type="ChEBI" id="CHEBI:78442"/>
        <dbReference type="ChEBI" id="CHEBI:78513"/>
        <dbReference type="ChEBI" id="CHEBI:456215"/>
        <dbReference type="EC" id="6.1.1.19"/>
    </reaction>
</comment>
<comment type="subunit">
    <text evidence="1">Monomer.</text>
</comment>
<comment type="subcellular location">
    <subcellularLocation>
        <location evidence="1">Cytoplasm</location>
    </subcellularLocation>
</comment>
<comment type="similarity">
    <text evidence="1">Belongs to the class-I aminoacyl-tRNA synthetase family.</text>
</comment>
<reference key="1">
    <citation type="submission" date="2005-10" db="EMBL/GenBank/DDBJ databases">
        <title>Complete sequence of chromosome 1 of Burkholderia sp. 383.</title>
        <authorList>
            <consortium name="US DOE Joint Genome Institute"/>
            <person name="Copeland A."/>
            <person name="Lucas S."/>
            <person name="Lapidus A."/>
            <person name="Barry K."/>
            <person name="Detter J.C."/>
            <person name="Glavina T."/>
            <person name="Hammon N."/>
            <person name="Israni S."/>
            <person name="Pitluck S."/>
            <person name="Chain P."/>
            <person name="Malfatti S."/>
            <person name="Shin M."/>
            <person name="Vergez L."/>
            <person name="Schmutz J."/>
            <person name="Larimer F."/>
            <person name="Land M."/>
            <person name="Kyrpides N."/>
            <person name="Lykidis A."/>
            <person name="Richardson P."/>
        </authorList>
    </citation>
    <scope>NUCLEOTIDE SEQUENCE [LARGE SCALE GENOMIC DNA]</scope>
    <source>
        <strain>ATCC 17760 / DSM 23089 / LMG 22485 / NCIMB 9086 / R18194 / 383</strain>
    </source>
</reference>
<gene>
    <name evidence="1" type="primary">argS</name>
    <name type="ordered locus">Bcep18194_A6262</name>
</gene>
<proteinExistence type="inferred from homology"/>